<accession>Q2YSM6</accession>
<sequence>MVLSIRSQIIIGVVSSILLTSTILAIAYILMWFNGHMTLTLTLTTIITSCLTLLICSIFINPLIQKIKQFNIKTKQFANGNYASNDKTFNSPKEIYELNQSFNKMASEITQQMNQIKSEQQEKTELIQNLAHDLKTPLASIISYSEGLRDGIITKDHEIKESYDILIKQANRLSTLFDDMTHIITLNTGKTYPPELIQLDQLLVSILQPYEQRIKHENRTLEVNFCSEIDAFYQYRTPLERILTNLLDNALKFSNVGSRIDINISENKDQDTIDIAISDEGIGIIPELQERIFERTFRVENSRNTKTGGSGLGLYIANELAQQNNAKISVSSDIDVGTTMTVTLHKLDITS</sequence>
<comment type="function">
    <text evidence="1">Member of the two-component regulatory system SaeR/SaeS involved in the regulation of staphylococcal virulence factors in a strain-dependent fashion. Probably functions as a membrane-associated protein kinase that upon sensing the appropriate signal, autophosphorylates and in turn activates the cytosolic response regulator SaeR (By similarity).</text>
</comment>
<comment type="catalytic activity">
    <reaction>
        <text>ATP + protein L-histidine = ADP + protein N-phospho-L-histidine.</text>
        <dbReference type="EC" id="2.7.13.3"/>
    </reaction>
</comment>
<comment type="subcellular location">
    <subcellularLocation>
        <location evidence="1">Cell membrane</location>
        <topology evidence="1">Multi-pass membrane protein</topology>
    </subcellularLocation>
</comment>
<comment type="PTM">
    <text evidence="1">Autophosphorylated.</text>
</comment>
<dbReference type="EC" id="2.7.13.3"/>
<dbReference type="EMBL" id="AJ938182">
    <property type="protein sequence ID" value="CAI80342.1"/>
    <property type="molecule type" value="Genomic_DNA"/>
</dbReference>
<dbReference type="RefSeq" id="WP_000244415.1">
    <property type="nucleotide sequence ID" value="NC_007622.1"/>
</dbReference>
<dbReference type="SMR" id="Q2YSM6"/>
<dbReference type="KEGG" id="sab:SAB0654c"/>
<dbReference type="HOGENOM" id="CLU_000445_89_3_9"/>
<dbReference type="GO" id="GO:0005886">
    <property type="term" value="C:plasma membrane"/>
    <property type="evidence" value="ECO:0007669"/>
    <property type="project" value="UniProtKB-SubCell"/>
</dbReference>
<dbReference type="GO" id="GO:0005524">
    <property type="term" value="F:ATP binding"/>
    <property type="evidence" value="ECO:0007669"/>
    <property type="project" value="UniProtKB-KW"/>
</dbReference>
<dbReference type="GO" id="GO:0004721">
    <property type="term" value="F:phosphoprotein phosphatase activity"/>
    <property type="evidence" value="ECO:0007669"/>
    <property type="project" value="TreeGrafter"/>
</dbReference>
<dbReference type="GO" id="GO:0000155">
    <property type="term" value="F:phosphorelay sensor kinase activity"/>
    <property type="evidence" value="ECO:0007669"/>
    <property type="project" value="InterPro"/>
</dbReference>
<dbReference type="GO" id="GO:0016036">
    <property type="term" value="P:cellular response to phosphate starvation"/>
    <property type="evidence" value="ECO:0007669"/>
    <property type="project" value="TreeGrafter"/>
</dbReference>
<dbReference type="CDD" id="cd00075">
    <property type="entry name" value="HATPase"/>
    <property type="match status" value="1"/>
</dbReference>
<dbReference type="CDD" id="cd00082">
    <property type="entry name" value="HisKA"/>
    <property type="match status" value="1"/>
</dbReference>
<dbReference type="FunFam" id="1.10.287.130:FF:000077">
    <property type="entry name" value="Sensor histidine kinase SaeS"/>
    <property type="match status" value="1"/>
</dbReference>
<dbReference type="Gene3D" id="1.10.287.130">
    <property type="match status" value="1"/>
</dbReference>
<dbReference type="Gene3D" id="6.10.340.10">
    <property type="match status" value="1"/>
</dbReference>
<dbReference type="Gene3D" id="3.30.565.10">
    <property type="entry name" value="Histidine kinase-like ATPase, C-terminal domain"/>
    <property type="match status" value="1"/>
</dbReference>
<dbReference type="InterPro" id="IPR050351">
    <property type="entry name" value="2-comp_sensor_kinase"/>
</dbReference>
<dbReference type="InterPro" id="IPR003660">
    <property type="entry name" value="HAMP_dom"/>
</dbReference>
<dbReference type="InterPro" id="IPR036890">
    <property type="entry name" value="HATPase_C_sf"/>
</dbReference>
<dbReference type="InterPro" id="IPR005467">
    <property type="entry name" value="His_kinase_dom"/>
</dbReference>
<dbReference type="InterPro" id="IPR003661">
    <property type="entry name" value="HisK_dim/P_dom"/>
</dbReference>
<dbReference type="InterPro" id="IPR036097">
    <property type="entry name" value="HisK_dim/P_sf"/>
</dbReference>
<dbReference type="InterPro" id="IPR004358">
    <property type="entry name" value="Sig_transdc_His_kin-like_C"/>
</dbReference>
<dbReference type="PANTHER" id="PTHR45453">
    <property type="entry name" value="PHOSPHATE REGULON SENSOR PROTEIN PHOR"/>
    <property type="match status" value="1"/>
</dbReference>
<dbReference type="PANTHER" id="PTHR45453:SF1">
    <property type="entry name" value="PHOSPHATE REGULON SENSOR PROTEIN PHOR"/>
    <property type="match status" value="1"/>
</dbReference>
<dbReference type="Pfam" id="PF00672">
    <property type="entry name" value="HAMP"/>
    <property type="match status" value="1"/>
</dbReference>
<dbReference type="Pfam" id="PF02518">
    <property type="entry name" value="HATPase_c"/>
    <property type="match status" value="1"/>
</dbReference>
<dbReference type="Pfam" id="PF00512">
    <property type="entry name" value="HisKA"/>
    <property type="match status" value="1"/>
</dbReference>
<dbReference type="PRINTS" id="PR00344">
    <property type="entry name" value="BCTRLSENSOR"/>
</dbReference>
<dbReference type="SMART" id="SM00387">
    <property type="entry name" value="HATPase_c"/>
    <property type="match status" value="1"/>
</dbReference>
<dbReference type="SMART" id="SM00388">
    <property type="entry name" value="HisKA"/>
    <property type="match status" value="1"/>
</dbReference>
<dbReference type="SUPFAM" id="SSF55874">
    <property type="entry name" value="ATPase domain of HSP90 chaperone/DNA topoisomerase II/histidine kinase"/>
    <property type="match status" value="1"/>
</dbReference>
<dbReference type="SUPFAM" id="SSF47384">
    <property type="entry name" value="Homodimeric domain of signal transducing histidine kinase"/>
    <property type="match status" value="1"/>
</dbReference>
<dbReference type="PROSITE" id="PS50885">
    <property type="entry name" value="HAMP"/>
    <property type="match status" value="1"/>
</dbReference>
<dbReference type="PROSITE" id="PS50109">
    <property type="entry name" value="HIS_KIN"/>
    <property type="match status" value="1"/>
</dbReference>
<keyword id="KW-0067">ATP-binding</keyword>
<keyword id="KW-1003">Cell membrane</keyword>
<keyword id="KW-0418">Kinase</keyword>
<keyword id="KW-0472">Membrane</keyword>
<keyword id="KW-0547">Nucleotide-binding</keyword>
<keyword id="KW-0597">Phosphoprotein</keyword>
<keyword id="KW-0808">Transferase</keyword>
<keyword id="KW-0812">Transmembrane</keyword>
<keyword id="KW-1133">Transmembrane helix</keyword>
<keyword id="KW-0902">Two-component regulatory system</keyword>
<keyword id="KW-0843">Virulence</keyword>
<feature type="chain" id="PRO_0000295930" description="Histidine protein kinase SaeS">
    <location>
        <begin position="1"/>
        <end position="351"/>
    </location>
</feature>
<feature type="transmembrane region" description="Helical" evidence="2">
    <location>
        <begin position="9"/>
        <end position="29"/>
    </location>
</feature>
<feature type="transmembrane region" description="Helical" evidence="2">
    <location>
        <begin position="40"/>
        <end position="60"/>
    </location>
</feature>
<feature type="domain" description="HAMP" evidence="3">
    <location>
        <begin position="61"/>
        <end position="114"/>
    </location>
</feature>
<feature type="domain" description="Histidine kinase" evidence="4">
    <location>
        <begin position="129"/>
        <end position="348"/>
    </location>
</feature>
<feature type="modified residue" description="Phosphohistidine; by autocatalysis" evidence="4">
    <location>
        <position position="132"/>
    </location>
</feature>
<gene>
    <name type="primary">saeS</name>
    <name type="ordered locus">SAB0654c</name>
</gene>
<organism>
    <name type="scientific">Staphylococcus aureus (strain bovine RF122 / ET3-1)</name>
    <dbReference type="NCBI Taxonomy" id="273036"/>
    <lineage>
        <taxon>Bacteria</taxon>
        <taxon>Bacillati</taxon>
        <taxon>Bacillota</taxon>
        <taxon>Bacilli</taxon>
        <taxon>Bacillales</taxon>
        <taxon>Staphylococcaceae</taxon>
        <taxon>Staphylococcus</taxon>
    </lineage>
</organism>
<reference key="1">
    <citation type="journal article" date="2007" name="PLoS ONE">
        <title>Molecular correlates of host specialization in Staphylococcus aureus.</title>
        <authorList>
            <person name="Herron-Olson L."/>
            <person name="Fitzgerald J.R."/>
            <person name="Musser J.M."/>
            <person name="Kapur V."/>
        </authorList>
    </citation>
    <scope>NUCLEOTIDE SEQUENCE [LARGE SCALE GENOMIC DNA]</scope>
    <source>
        <strain>bovine RF122 / ET3-1</strain>
    </source>
</reference>
<name>SAES_STAAB</name>
<proteinExistence type="inferred from homology"/>
<evidence type="ECO:0000250" key="1"/>
<evidence type="ECO:0000255" key="2"/>
<evidence type="ECO:0000255" key="3">
    <source>
        <dbReference type="PROSITE-ProRule" id="PRU00102"/>
    </source>
</evidence>
<evidence type="ECO:0000255" key="4">
    <source>
        <dbReference type="PROSITE-ProRule" id="PRU00107"/>
    </source>
</evidence>
<protein>
    <recommendedName>
        <fullName>Histidine protein kinase SaeS</fullName>
        <ecNumber>2.7.13.3</ecNumber>
    </recommendedName>
    <alternativeName>
        <fullName>Sensor protein SaeS</fullName>
    </alternativeName>
    <alternativeName>
        <fullName>Staphylococcus exoprotein expression protein S</fullName>
    </alternativeName>
</protein>